<sequence length="231" mass="25883">MSSCMLFFTVIIAGVFMGTIATNYCNLKSCVNYGNIHTMCKYTSSTPASTCSKWEKAGLTDAEKKTIVTLHNQLRRKVAAGKETRGNPGPQPAAATMPDLTWDNELAMVAQRWANQCKYGHDACRNIERFQVGQNVAIRGSTGENLSTVDQMILSWYSEVDLMNKKYVSSFPKDDTYKKIGHYTQIVYGNTKTIGCGRIFYKDGKWNQQYLVCNYGPAGNYPNAPVYQIKQ</sequence>
<comment type="subcellular location">
    <subcellularLocation>
        <location evidence="5">Secreted</location>
    </subcellularLocation>
</comment>
<comment type="tissue specificity">
    <text evidence="5">Expressed by the venom gland.</text>
</comment>
<comment type="allergen">
    <text evidence="1">Causes an allergic reaction in human.</text>
</comment>
<comment type="similarity">
    <text evidence="4">Belongs to the CRISP family.</text>
</comment>
<comment type="online information" name="National Center for Biotechnology Information (NCBI)">
    <link uri="https://www.ncbi.nlm.nih.gov/nuccore/GANS01000010"/>
</comment>
<organism>
    <name type="scientific">Dinoponera quadriceps</name>
    <name type="common">South American ant</name>
    <dbReference type="NCBI Taxonomy" id="609295"/>
    <lineage>
        <taxon>Eukaryota</taxon>
        <taxon>Metazoa</taxon>
        <taxon>Ecdysozoa</taxon>
        <taxon>Arthropoda</taxon>
        <taxon>Hexapoda</taxon>
        <taxon>Insecta</taxon>
        <taxon>Pterygota</taxon>
        <taxon>Neoptera</taxon>
        <taxon>Endopterygota</taxon>
        <taxon>Hymenoptera</taxon>
        <taxon>Apocrita</taxon>
        <taxon>Aculeata</taxon>
        <taxon>Formicoidea</taxon>
        <taxon>Formicidae</taxon>
        <taxon>Ponerinae</taxon>
        <taxon>Ponerini</taxon>
        <taxon>Dinoponera</taxon>
    </lineage>
</organism>
<feature type="signal peptide" evidence="2">
    <location>
        <begin position="1"/>
        <end position="21"/>
    </location>
</feature>
<feature type="chain" id="PRO_0000447048" description="Venom allergen 3 homolog" evidence="4">
    <location>
        <begin position="22"/>
        <end position="231"/>
    </location>
</feature>
<feature type="domain" description="SCP">
    <location>
        <begin position="68"/>
        <end position="215"/>
    </location>
</feature>
<feature type="glycosylation site" description="N-linked (GlcNAc...) asparagine" evidence="3">
    <location>
        <position position="145"/>
    </location>
</feature>
<feature type="disulfide bond" evidence="1">
    <location>
        <begin position="25"/>
        <end position="40"/>
    </location>
</feature>
<feature type="disulfide bond" evidence="1">
    <location>
        <begin position="30"/>
        <end position="124"/>
    </location>
</feature>
<feature type="disulfide bond" evidence="1">
    <location>
        <begin position="51"/>
        <end position="117"/>
    </location>
</feature>
<feature type="disulfide bond" evidence="1">
    <location>
        <begin position="196"/>
        <end position="213"/>
    </location>
</feature>
<name>VA3_DINQU</name>
<dbReference type="RefSeq" id="XP_014469499.1">
    <property type="nucleotide sequence ID" value="XM_014614013.1"/>
</dbReference>
<dbReference type="SMR" id="P0DSI3"/>
<dbReference type="GeneID" id="106741736"/>
<dbReference type="KEGG" id="dqu:106741736"/>
<dbReference type="OrthoDB" id="43654at2759"/>
<dbReference type="Proteomes" id="UP000515204">
    <property type="component" value="Unplaced"/>
</dbReference>
<dbReference type="GO" id="GO:0005576">
    <property type="term" value="C:extracellular region"/>
    <property type="evidence" value="ECO:0007669"/>
    <property type="project" value="UniProtKB-SubCell"/>
</dbReference>
<dbReference type="CDD" id="cd05380">
    <property type="entry name" value="CAP_euk"/>
    <property type="match status" value="1"/>
</dbReference>
<dbReference type="Gene3D" id="3.40.33.10">
    <property type="entry name" value="CAP"/>
    <property type="match status" value="1"/>
</dbReference>
<dbReference type="InterPro" id="IPR018244">
    <property type="entry name" value="Allrgn_V5/Tpx1_CS"/>
</dbReference>
<dbReference type="InterPro" id="IPR014044">
    <property type="entry name" value="CAP_dom"/>
</dbReference>
<dbReference type="InterPro" id="IPR035940">
    <property type="entry name" value="CAP_sf"/>
</dbReference>
<dbReference type="InterPro" id="IPR001283">
    <property type="entry name" value="CRISP-related"/>
</dbReference>
<dbReference type="InterPro" id="IPR034763">
    <property type="entry name" value="P14a_insect"/>
</dbReference>
<dbReference type="InterPro" id="IPR002413">
    <property type="entry name" value="V5_allergen-like"/>
</dbReference>
<dbReference type="PANTHER" id="PTHR10334">
    <property type="entry name" value="CYSTEINE-RICH SECRETORY PROTEIN-RELATED"/>
    <property type="match status" value="1"/>
</dbReference>
<dbReference type="Pfam" id="PF00188">
    <property type="entry name" value="CAP"/>
    <property type="match status" value="1"/>
</dbReference>
<dbReference type="PIRSF" id="PIRSF038921">
    <property type="entry name" value="P14a"/>
    <property type="match status" value="1"/>
</dbReference>
<dbReference type="PRINTS" id="PR00838">
    <property type="entry name" value="V5ALLERGEN"/>
</dbReference>
<dbReference type="PRINTS" id="PR00837">
    <property type="entry name" value="V5TPXLIKE"/>
</dbReference>
<dbReference type="SMART" id="SM00198">
    <property type="entry name" value="SCP"/>
    <property type="match status" value="1"/>
</dbReference>
<dbReference type="SUPFAM" id="SSF55797">
    <property type="entry name" value="PR-1-like"/>
    <property type="match status" value="1"/>
</dbReference>
<dbReference type="PROSITE" id="PS01010">
    <property type="entry name" value="CRISP_2"/>
    <property type="match status" value="1"/>
</dbReference>
<protein>
    <recommendedName>
        <fullName evidence="1">Venom allergen 3 homolog</fullName>
    </recommendedName>
    <alternativeName>
        <fullName evidence="4">Cysteine-rich venom protein</fullName>
        <shortName evidence="4">CRVP</shortName>
    </alternativeName>
</protein>
<keyword id="KW-0020">Allergen</keyword>
<keyword id="KW-1015">Disulfide bond</keyword>
<keyword id="KW-0325">Glycoprotein</keyword>
<keyword id="KW-1185">Reference proteome</keyword>
<keyword id="KW-0964">Secreted</keyword>
<keyword id="KW-0732">Signal</keyword>
<reference key="1">
    <citation type="journal article" date="2014" name="PLoS ONE">
        <title>Transcriptome analysis in venom gland of the predatory giant ant Dinoponera quadriceps: insights into the polypeptide toxin arsenal of hymenopterans.</title>
        <authorList>
            <person name="Torres A.F."/>
            <person name="Huang C."/>
            <person name="Chong C.M."/>
            <person name="Leung S.W."/>
            <person name="Prieto-da-Silva A.R."/>
            <person name="Havt A."/>
            <person name="Quinet Y.P."/>
            <person name="Martins A.M."/>
            <person name="Lee S.M."/>
            <person name="Radis-Baptista G."/>
        </authorList>
    </citation>
    <scope>NUCLEOTIDE SEQUENCE [MRNA]</scope>
    <source>
        <tissue>Venom gland</tissue>
    </source>
</reference>
<proteinExistence type="evidence at transcript level"/>
<evidence type="ECO:0000250" key="1">
    <source>
        <dbReference type="UniProtKB" id="P35778"/>
    </source>
</evidence>
<evidence type="ECO:0000255" key="2"/>
<evidence type="ECO:0000255" key="3">
    <source>
        <dbReference type="PROSITE-ProRule" id="PRU00498"/>
    </source>
</evidence>
<evidence type="ECO:0000305" key="4"/>
<evidence type="ECO:0000305" key="5">
    <source>
    </source>
</evidence>
<accession>P0DSI3</accession>